<sequence length="882" mass="92776">MLLGASWLCASKAAAAAAQSEGDEDRPGERRRRRAAATAAGAGEDMDESSLLDLLECSVCLERLDTTAKVLPCQHTFCRRCLESIVCSRHELRCPECRILVGCGVDELPANILLVRLLDGIRQRPRAGTSPGGSPPARPIPGQSAAPTLAGGGGGAAGSTPGSPVFLSAAAGSTAGSLRELATSRTAPAAKNPCLLPYGKALYSYEGKEPGDLKFNKGDIIVLRRKVDEQWYHGELHGTQGFLPASYIQCIQPLPHAPPQGKALYDFEMKDKDQDKDCLTFTKDEILTVLRRVDENWAEGMLGDKIGIFPLLYVELNDSAKQLIEMDKPCPAAASSCNASLPSDSGAVASVAPSPTLSSSGAVSAFQRRVDGKKNTKKRHSFTALSVTHRSSQAASHRHSMEISAPVLISSSDPRAAARIGDLAHLSCAAPTQDVSSSAGSTPTAVPRAASVSGEQGTPPKVQLPLNVYLALYAYKPQKSDELELHKGEMYRVLEKCQDGWFKGASLRTGVSGVFPGNYVTPVSRVPAGGAGPPRNNVVGGSPLAKGITTTMHPGSGSLSSLATATRPALPITTPQAHAQHPTASPPTGSCLRHSAQPTASQARSTISTAAHSAAQAQDRPTATVSPLRTQNSPSRLPATSLRPHSVVSPQHSHQPPVQMCPRPAIPLTSAASAITPPNVSAANLNGEAGGGPIGVLSTSSPTNTGCKLDEKKSEKKEKKSGLLKLLAGASTKKKSRSPPSVSPTHDPQVAVDALLQGAVGPEVSSLSIHGRAGSCPIESEMQGAMGMEPLHRKAGSLDLNFTSPSRQAPLSMAAIRPEPKLLPRERYRVVVSYPPQSEAEIELKEGDIVFVHKKREDGWYKGTLQRNGRTGLFPGSFVESF</sequence>
<gene>
    <name type="primary">SH3RF3</name>
    <name evidence="6" type="synonym">POSH2</name>
    <name type="synonym">SH3MD4</name>
</gene>
<accession>Q8TEJ3</accession>
<accession>A0SDZ7</accession>
<accession>A8MPR1</accession>
<accession>Q8NDU1</accession>
<reference key="1">
    <citation type="journal article" date="2005" name="Nature">
        <title>Generation and annotation of the DNA sequences of human chromosomes 2 and 4.</title>
        <authorList>
            <person name="Hillier L.W."/>
            <person name="Graves T.A."/>
            <person name="Fulton R.S."/>
            <person name="Fulton L.A."/>
            <person name="Pepin K.H."/>
            <person name="Minx P."/>
            <person name="Wagner-McPherson C."/>
            <person name="Layman D."/>
            <person name="Wylie K."/>
            <person name="Sekhon M."/>
            <person name="Becker M.C."/>
            <person name="Fewell G.A."/>
            <person name="Delehaunty K.D."/>
            <person name="Miner T.L."/>
            <person name="Nash W.E."/>
            <person name="Kremitzki C."/>
            <person name="Oddy L."/>
            <person name="Du H."/>
            <person name="Sun H."/>
            <person name="Bradshaw-Cordum H."/>
            <person name="Ali J."/>
            <person name="Carter J."/>
            <person name="Cordes M."/>
            <person name="Harris A."/>
            <person name="Isak A."/>
            <person name="van Brunt A."/>
            <person name="Nguyen C."/>
            <person name="Du F."/>
            <person name="Courtney L."/>
            <person name="Kalicki J."/>
            <person name="Ozersky P."/>
            <person name="Abbott S."/>
            <person name="Armstrong J."/>
            <person name="Belter E.A."/>
            <person name="Caruso L."/>
            <person name="Cedroni M."/>
            <person name="Cotton M."/>
            <person name="Davidson T."/>
            <person name="Desai A."/>
            <person name="Elliott G."/>
            <person name="Erb T."/>
            <person name="Fronick C."/>
            <person name="Gaige T."/>
            <person name="Haakenson W."/>
            <person name="Haglund K."/>
            <person name="Holmes A."/>
            <person name="Harkins R."/>
            <person name="Kim K."/>
            <person name="Kruchowski S.S."/>
            <person name="Strong C.M."/>
            <person name="Grewal N."/>
            <person name="Goyea E."/>
            <person name="Hou S."/>
            <person name="Levy A."/>
            <person name="Martinka S."/>
            <person name="Mead K."/>
            <person name="McLellan M.D."/>
            <person name="Meyer R."/>
            <person name="Randall-Maher J."/>
            <person name="Tomlinson C."/>
            <person name="Dauphin-Kohlberg S."/>
            <person name="Kozlowicz-Reilly A."/>
            <person name="Shah N."/>
            <person name="Swearengen-Shahid S."/>
            <person name="Snider J."/>
            <person name="Strong J.T."/>
            <person name="Thompson J."/>
            <person name="Yoakum M."/>
            <person name="Leonard S."/>
            <person name="Pearman C."/>
            <person name="Trani L."/>
            <person name="Radionenko M."/>
            <person name="Waligorski J.E."/>
            <person name="Wang C."/>
            <person name="Rock S.M."/>
            <person name="Tin-Wollam A.-M."/>
            <person name="Maupin R."/>
            <person name="Latreille P."/>
            <person name="Wendl M.C."/>
            <person name="Yang S.-P."/>
            <person name="Pohl C."/>
            <person name="Wallis J.W."/>
            <person name="Spieth J."/>
            <person name="Bieri T.A."/>
            <person name="Berkowicz N."/>
            <person name="Nelson J.O."/>
            <person name="Osborne J."/>
            <person name="Ding L."/>
            <person name="Meyer R."/>
            <person name="Sabo A."/>
            <person name="Shotland Y."/>
            <person name="Sinha P."/>
            <person name="Wohldmann P.E."/>
            <person name="Cook L.L."/>
            <person name="Hickenbotham M.T."/>
            <person name="Eldred J."/>
            <person name="Williams D."/>
            <person name="Jones T.A."/>
            <person name="She X."/>
            <person name="Ciccarelli F.D."/>
            <person name="Izaurralde E."/>
            <person name="Taylor J."/>
            <person name="Schmutz J."/>
            <person name="Myers R.M."/>
            <person name="Cox D.R."/>
            <person name="Huang X."/>
            <person name="McPherson J.D."/>
            <person name="Mardis E.R."/>
            <person name="Clifton S.W."/>
            <person name="Warren W.C."/>
            <person name="Chinwalla A.T."/>
            <person name="Eddy S.R."/>
            <person name="Marra M.A."/>
            <person name="Ovcharenko I."/>
            <person name="Furey T.S."/>
            <person name="Miller W."/>
            <person name="Eichler E.E."/>
            <person name="Bork P."/>
            <person name="Suyama M."/>
            <person name="Torrents D."/>
            <person name="Waterston R.H."/>
            <person name="Wilson R.K."/>
        </authorList>
    </citation>
    <scope>NUCLEOTIDE SEQUENCE [LARGE SCALE GENOMIC DNA]</scope>
</reference>
<reference key="2">
    <citation type="journal article" date="2006" name="EMBO Rep.">
        <title>Identification of preferred protein interactions by phage-display of the human Src homology-3 proteome.</title>
        <authorList>
            <person name="Kaerkkaeinen S."/>
            <person name="Hiipakka M."/>
            <person name="Wang J.-H."/>
            <person name="Kleino I."/>
            <person name="Vaehae-Jaakkola M."/>
            <person name="Renkema G.H."/>
            <person name="Liss M."/>
            <person name="Wagner R."/>
            <person name="Saksela K."/>
        </authorList>
    </citation>
    <scope>NUCLEOTIDE SEQUENCE [MRNA] OF 46-314</scope>
    <scope>INTERACTION WITH PAK2</scope>
</reference>
<reference key="3">
    <citation type="journal article" date="2003" name="DNA Res.">
        <title>Characterization of long cDNA clones from human adult spleen. II. The complete sequences of 81 cDNA clones.</title>
        <authorList>
            <person name="Jikuya H."/>
            <person name="Takano J."/>
            <person name="Kikuno R."/>
            <person name="Hirosawa M."/>
            <person name="Nagase T."/>
            <person name="Nomura N."/>
            <person name="Ohara O."/>
        </authorList>
    </citation>
    <scope>NUCLEOTIDE SEQUENCE [LARGE SCALE MRNA] OF 310-882</scope>
    <source>
        <tissue>Spleen</tissue>
    </source>
</reference>
<reference key="4">
    <citation type="journal article" date="2007" name="BMC Genomics">
        <title>The full-ORF clone resource of the German cDNA consortium.</title>
        <authorList>
            <person name="Bechtel S."/>
            <person name="Rosenfelder H."/>
            <person name="Duda A."/>
            <person name="Schmidt C.P."/>
            <person name="Ernst U."/>
            <person name="Wellenreuther R."/>
            <person name="Mehrle A."/>
            <person name="Schuster C."/>
            <person name="Bahr A."/>
            <person name="Bloecker H."/>
            <person name="Heubner D."/>
            <person name="Hoerlein A."/>
            <person name="Michel G."/>
            <person name="Wedler H."/>
            <person name="Koehrer K."/>
            <person name="Ottenwaelder B."/>
            <person name="Poustka A."/>
            <person name="Wiemann S."/>
            <person name="Schupp I."/>
        </authorList>
    </citation>
    <scope>NUCLEOTIDE SEQUENCE [LARGE SCALE MRNA] OF 672-882</scope>
    <source>
        <tissue>Brain</tissue>
    </source>
</reference>
<reference key="5">
    <citation type="journal article" date="2008" name="J. Proteome Res.">
        <title>Combining protein-based IMAC, peptide-based IMAC, and MudPIT for efficient phosphoproteomic analysis.</title>
        <authorList>
            <person name="Cantin G.T."/>
            <person name="Yi W."/>
            <person name="Lu B."/>
            <person name="Park S.K."/>
            <person name="Xu T."/>
            <person name="Lee J.-D."/>
            <person name="Yates J.R. III"/>
        </authorList>
    </citation>
    <scope>PHOSPHORYLATION [LARGE SCALE ANALYSIS] AT SER-400 AND SER-797</scope>
    <scope>IDENTIFICATION BY MASS SPECTROMETRY [LARGE SCALE ANALYSIS]</scope>
    <source>
        <tissue>Cervix carcinoma</tissue>
    </source>
</reference>
<reference key="6">
    <citation type="journal article" date="2008" name="Proc. Natl. Acad. Sci. U.S.A.">
        <title>A quantitative atlas of mitotic phosphorylation.</title>
        <authorList>
            <person name="Dephoure N."/>
            <person name="Zhou C."/>
            <person name="Villen J."/>
            <person name="Beausoleil S.A."/>
            <person name="Bakalarski C.E."/>
            <person name="Elledge S.J."/>
            <person name="Gygi S.P."/>
        </authorList>
    </citation>
    <scope>PHOSPHORYLATION [LARGE SCALE ANALYSIS] AT SER-797</scope>
    <scope>IDENTIFICATION BY MASS SPECTROMETRY [LARGE SCALE ANALYSIS]</scope>
    <source>
        <tissue>Cervix carcinoma</tissue>
    </source>
</reference>
<reference key="7">
    <citation type="journal article" date="2010" name="FEBS Lett.">
        <title>POSH2 is a RING finger E3 ligase with Rac1 binding activity through a partial CRIB domain.</title>
        <authorList>
            <person name="Kaerkkaeinen S."/>
            <person name="van der Linden M."/>
            <person name="Renkema G.H."/>
        </authorList>
    </citation>
    <scope>FUNCTION AS AN E3 UBIQUITIN-PROTEIN LIGASE</scope>
    <scope>CATALYTIC ACTIVITY</scope>
    <scope>AUTOUBIQUITINATION</scope>
    <scope>INTERACTION WITH RAC1</scope>
    <scope>MUTAGENESIS OF CYS-73; HIS-75; ILE-403; SER-404 AND PRO-406</scope>
</reference>
<evidence type="ECO:0000255" key="1">
    <source>
        <dbReference type="PROSITE-ProRule" id="PRU00175"/>
    </source>
</evidence>
<evidence type="ECO:0000255" key="2">
    <source>
        <dbReference type="PROSITE-ProRule" id="PRU00192"/>
    </source>
</evidence>
<evidence type="ECO:0000256" key="3">
    <source>
        <dbReference type="SAM" id="MobiDB-lite"/>
    </source>
</evidence>
<evidence type="ECO:0000269" key="4">
    <source>
    </source>
</evidence>
<evidence type="ECO:0000269" key="5">
    <source>
    </source>
</evidence>
<evidence type="ECO:0000303" key="6">
    <source>
    </source>
</evidence>
<evidence type="ECO:0000305" key="7"/>
<evidence type="ECO:0007744" key="8">
    <source>
    </source>
</evidence>
<evidence type="ECO:0007744" key="9">
    <source>
    </source>
</evidence>
<feature type="chain" id="PRO_0000284883" description="E3 ubiquitin-protein ligase SH3RF3">
    <location>
        <begin position="1"/>
        <end position="882"/>
    </location>
</feature>
<feature type="domain" description="SH3 1" evidence="2">
    <location>
        <begin position="194"/>
        <end position="253"/>
    </location>
</feature>
<feature type="domain" description="SH3 2" evidence="2">
    <location>
        <begin position="256"/>
        <end position="319"/>
    </location>
</feature>
<feature type="domain" description="SH3 3" evidence="2">
    <location>
        <begin position="464"/>
        <end position="525"/>
    </location>
</feature>
<feature type="domain" description="SH3 4" evidence="2">
    <location>
        <begin position="823"/>
        <end position="882"/>
    </location>
</feature>
<feature type="zinc finger region" description="RING-type" evidence="1">
    <location>
        <begin position="57"/>
        <end position="98"/>
    </location>
</feature>
<feature type="region of interest" description="Disordered" evidence="3">
    <location>
        <begin position="18"/>
        <end position="42"/>
    </location>
</feature>
<feature type="region of interest" description="Disordered" evidence="3">
    <location>
        <begin position="124"/>
        <end position="159"/>
    </location>
</feature>
<feature type="region of interest" description="Disordered" evidence="3">
    <location>
        <begin position="368"/>
        <end position="399"/>
    </location>
</feature>
<feature type="region of interest" description="Interaction with RAC1" evidence="5">
    <location>
        <begin position="369"/>
        <end position="439"/>
    </location>
</feature>
<feature type="region of interest" description="Disordered" evidence="3">
    <location>
        <begin position="433"/>
        <end position="458"/>
    </location>
</feature>
<feature type="region of interest" description="Disordered" evidence="3">
    <location>
        <begin position="575"/>
        <end position="664"/>
    </location>
</feature>
<feature type="region of interest" description="Disordered" evidence="3">
    <location>
        <begin position="693"/>
        <end position="747"/>
    </location>
</feature>
<feature type="compositionally biased region" description="Polar residues" evidence="3">
    <location>
        <begin position="433"/>
        <end position="444"/>
    </location>
</feature>
<feature type="compositionally biased region" description="Polar residues" evidence="3">
    <location>
        <begin position="575"/>
        <end position="588"/>
    </location>
</feature>
<feature type="compositionally biased region" description="Polar residues" evidence="3">
    <location>
        <begin position="596"/>
        <end position="635"/>
    </location>
</feature>
<feature type="compositionally biased region" description="Polar residues" evidence="3">
    <location>
        <begin position="697"/>
        <end position="706"/>
    </location>
</feature>
<feature type="compositionally biased region" description="Basic and acidic residues" evidence="3">
    <location>
        <begin position="708"/>
        <end position="721"/>
    </location>
</feature>
<feature type="modified residue" description="Phosphoserine" evidence="8">
    <location>
        <position position="400"/>
    </location>
</feature>
<feature type="modified residue" description="Phosphoserine" evidence="8 9">
    <location>
        <position position="797"/>
    </location>
</feature>
<feature type="mutagenesis site" description="Significant reduction in autoubiquitination; when associated with A-75." evidence="5">
    <original>C</original>
    <variation>A</variation>
    <location>
        <position position="73"/>
    </location>
</feature>
<feature type="mutagenesis site" description="Significant reduction in autoubiquitination; when associated with A-73." evidence="5">
    <original>H</original>
    <variation>A</variation>
    <location>
        <position position="75"/>
    </location>
</feature>
<feature type="mutagenesis site" description="Significant loss of interaction with RAC1; alone or when associated with P-404 and A-406." evidence="5">
    <original>I</original>
    <variation>N</variation>
    <location>
        <position position="403"/>
    </location>
</feature>
<feature type="mutagenesis site" description="Reduced JNK activation. Significant loss of interaction with RAC1; alone or when associated with N-403 and A-406." evidence="5">
    <original>S</original>
    <variation>P</variation>
    <location>
        <position position="404"/>
    </location>
</feature>
<feature type="mutagenesis site" description="Significant loss of interaction with RAC1; when associated with N-403 and P-404." evidence="5">
    <original>P</original>
    <variation>A</variation>
    <location>
        <position position="406"/>
    </location>
</feature>
<protein>
    <recommendedName>
        <fullName>E3 ubiquitin-protein ligase SH3RF3</fullName>
        <ecNumber evidence="5">2.3.2.27</ecNumber>
    </recommendedName>
    <alternativeName>
        <fullName>Plenty of SH3s 2</fullName>
    </alternativeName>
    <alternativeName>
        <fullName>SH3 domain-containing RING finger protein 3</fullName>
    </alternativeName>
    <alternativeName>
        <fullName>SH3 multiple domains protein 4</fullName>
    </alternativeName>
</protein>
<dbReference type="EC" id="2.3.2.27" evidence="5"/>
<dbReference type="EMBL" id="AC010906">
    <property type="status" value="NOT_ANNOTATED_CDS"/>
    <property type="molecule type" value="Genomic_DNA"/>
</dbReference>
<dbReference type="EMBL" id="AC140485">
    <property type="status" value="NOT_ANNOTATED_CDS"/>
    <property type="molecule type" value="Genomic_DNA"/>
</dbReference>
<dbReference type="EMBL" id="AC139850">
    <property type="status" value="NOT_ANNOTATED_CDS"/>
    <property type="molecule type" value="Genomic_DNA"/>
</dbReference>
<dbReference type="EMBL" id="AC109344">
    <property type="status" value="NOT_ANNOTATED_CDS"/>
    <property type="molecule type" value="Genomic_DNA"/>
</dbReference>
<dbReference type="EMBL" id="DQ307286">
    <property type="protein sequence ID" value="ABC25188.1"/>
    <property type="molecule type" value="mRNA"/>
</dbReference>
<dbReference type="EMBL" id="AK074131">
    <property type="protein sequence ID" value="BAB84957.1"/>
    <property type="molecule type" value="mRNA"/>
</dbReference>
<dbReference type="EMBL" id="AL831825">
    <property type="protein sequence ID" value="CAD38539.1"/>
    <property type="molecule type" value="mRNA"/>
</dbReference>
<dbReference type="CCDS" id="CCDS74557.1"/>
<dbReference type="RefSeq" id="NP_001092759.1">
    <property type="nucleotide sequence ID" value="NM_001099289.3"/>
</dbReference>
<dbReference type="SMR" id="Q8TEJ3"/>
<dbReference type="BioGRID" id="131307">
    <property type="interactions" value="56"/>
</dbReference>
<dbReference type="DIP" id="DIP-43763N"/>
<dbReference type="FunCoup" id="Q8TEJ3">
    <property type="interactions" value="215"/>
</dbReference>
<dbReference type="IntAct" id="Q8TEJ3">
    <property type="interactions" value="12"/>
</dbReference>
<dbReference type="MINT" id="Q8TEJ3"/>
<dbReference type="STRING" id="9606.ENSP00000309186"/>
<dbReference type="GlyGen" id="Q8TEJ3">
    <property type="glycosylation" value="6 sites, 1 N-linked glycan (1 site), 1 O-linked glycan (2 sites)"/>
</dbReference>
<dbReference type="iPTMnet" id="Q8TEJ3"/>
<dbReference type="PhosphoSitePlus" id="Q8TEJ3"/>
<dbReference type="BioMuta" id="SH3RF3"/>
<dbReference type="DMDM" id="146325718"/>
<dbReference type="jPOST" id="Q8TEJ3"/>
<dbReference type="MassIVE" id="Q8TEJ3"/>
<dbReference type="PaxDb" id="9606-ENSP00000309186"/>
<dbReference type="PeptideAtlas" id="Q8TEJ3"/>
<dbReference type="ProteomicsDB" id="74467"/>
<dbReference type="ABCD" id="Q8TEJ3">
    <property type="antibodies" value="1 sequenced antibody"/>
</dbReference>
<dbReference type="Antibodypedia" id="64583">
    <property type="antibodies" value="76 antibodies from 18 providers"/>
</dbReference>
<dbReference type="DNASU" id="344558"/>
<dbReference type="Ensembl" id="ENST00000309415.8">
    <property type="protein sequence ID" value="ENSP00000309186.6"/>
    <property type="gene ID" value="ENSG00000172985.11"/>
</dbReference>
<dbReference type="GeneID" id="344558"/>
<dbReference type="KEGG" id="hsa:344558"/>
<dbReference type="MANE-Select" id="ENST00000309415.8">
    <property type="protein sequence ID" value="ENSP00000309186.6"/>
    <property type="RefSeq nucleotide sequence ID" value="NM_001099289.3"/>
    <property type="RefSeq protein sequence ID" value="NP_001092759.1"/>
</dbReference>
<dbReference type="UCSC" id="uc010ywt.2">
    <property type="organism name" value="human"/>
</dbReference>
<dbReference type="AGR" id="HGNC:24699"/>
<dbReference type="CTD" id="344558"/>
<dbReference type="DisGeNET" id="344558"/>
<dbReference type="GeneCards" id="SH3RF3"/>
<dbReference type="HGNC" id="HGNC:24699">
    <property type="gene designation" value="SH3RF3"/>
</dbReference>
<dbReference type="HPA" id="ENSG00000172985">
    <property type="expression patterns" value="Low tissue specificity"/>
</dbReference>
<dbReference type="MIM" id="618933">
    <property type="type" value="gene"/>
</dbReference>
<dbReference type="neXtProt" id="NX_Q8TEJ3"/>
<dbReference type="OpenTargets" id="ENSG00000172985"/>
<dbReference type="PharmGKB" id="PA162403291"/>
<dbReference type="VEuPathDB" id="HostDB:ENSG00000172985"/>
<dbReference type="eggNOG" id="KOG2177">
    <property type="taxonomic scope" value="Eukaryota"/>
</dbReference>
<dbReference type="eggNOG" id="KOG4225">
    <property type="taxonomic scope" value="Eukaryota"/>
</dbReference>
<dbReference type="GeneTree" id="ENSGT00940000160405"/>
<dbReference type="HOGENOM" id="CLU_015769_1_0_1"/>
<dbReference type="InParanoid" id="Q8TEJ3"/>
<dbReference type="OMA" id="SEMRGAM"/>
<dbReference type="OrthoDB" id="19092at2759"/>
<dbReference type="PAN-GO" id="Q8TEJ3">
    <property type="GO annotations" value="4 GO annotations based on evolutionary models"/>
</dbReference>
<dbReference type="PhylomeDB" id="Q8TEJ3"/>
<dbReference type="TreeFam" id="TF105571"/>
<dbReference type="PathwayCommons" id="Q8TEJ3"/>
<dbReference type="SignaLink" id="Q8TEJ3"/>
<dbReference type="SIGNOR" id="Q8TEJ3"/>
<dbReference type="UniPathway" id="UPA00143"/>
<dbReference type="BioGRID-ORCS" id="344558">
    <property type="hits" value="6 hits in 324 CRISPR screens"/>
</dbReference>
<dbReference type="GenomeRNAi" id="344558"/>
<dbReference type="Pharos" id="Q8TEJ3">
    <property type="development level" value="Tbio"/>
</dbReference>
<dbReference type="PRO" id="PR:Q8TEJ3"/>
<dbReference type="Proteomes" id="UP000005640">
    <property type="component" value="Chromosome 2"/>
</dbReference>
<dbReference type="RNAct" id="Q8TEJ3">
    <property type="molecule type" value="protein"/>
</dbReference>
<dbReference type="Bgee" id="ENSG00000172985">
    <property type="expression patterns" value="Expressed in pancreatic ductal cell and 168 other cell types or tissues"/>
</dbReference>
<dbReference type="GO" id="GO:0061630">
    <property type="term" value="F:ubiquitin protein ligase activity"/>
    <property type="evidence" value="ECO:0000315"/>
    <property type="project" value="UniProtKB"/>
</dbReference>
<dbReference type="GO" id="GO:0008270">
    <property type="term" value="F:zinc ion binding"/>
    <property type="evidence" value="ECO:0007669"/>
    <property type="project" value="UniProtKB-KW"/>
</dbReference>
<dbReference type="GO" id="GO:0046330">
    <property type="term" value="P:positive regulation of JNK cascade"/>
    <property type="evidence" value="ECO:0000315"/>
    <property type="project" value="UniProtKB"/>
</dbReference>
<dbReference type="GO" id="GO:0032436">
    <property type="term" value="P:positive regulation of proteasomal ubiquitin-dependent protein catabolic process"/>
    <property type="evidence" value="ECO:0000318"/>
    <property type="project" value="GO_Central"/>
</dbReference>
<dbReference type="GO" id="GO:0051865">
    <property type="term" value="P:protein autoubiquitination"/>
    <property type="evidence" value="ECO:0000315"/>
    <property type="project" value="UniProtKB"/>
</dbReference>
<dbReference type="GO" id="GO:0016567">
    <property type="term" value="P:protein ubiquitination"/>
    <property type="evidence" value="ECO:0000318"/>
    <property type="project" value="GO_Central"/>
</dbReference>
<dbReference type="CDD" id="cd16750">
    <property type="entry name" value="RING-HC_SH3RF3"/>
    <property type="match status" value="1"/>
</dbReference>
<dbReference type="CDD" id="cd11928">
    <property type="entry name" value="SH3_SH3RF3_1"/>
    <property type="match status" value="1"/>
</dbReference>
<dbReference type="CDD" id="cd11931">
    <property type="entry name" value="SH3_SH3RF3_2"/>
    <property type="match status" value="1"/>
</dbReference>
<dbReference type="CDD" id="cd11925">
    <property type="entry name" value="SH3_SH3RF3_3"/>
    <property type="match status" value="1"/>
</dbReference>
<dbReference type="CDD" id="cd11785">
    <property type="entry name" value="SH3_SH3RF_C"/>
    <property type="match status" value="1"/>
</dbReference>
<dbReference type="FunFam" id="3.30.40.10:FF:000077">
    <property type="entry name" value="E3 ubiquitin-protein ligase SH3RF1 isoform X1"/>
    <property type="match status" value="1"/>
</dbReference>
<dbReference type="FunFam" id="2.30.30.40:FF:000063">
    <property type="entry name" value="Putative E3 ubiquitin-protein ligase SH3RF1"/>
    <property type="match status" value="1"/>
</dbReference>
<dbReference type="FunFam" id="2.30.30.40:FF:000091">
    <property type="entry name" value="Putative E3 ubiquitin-protein ligase SH3RF1"/>
    <property type="match status" value="1"/>
</dbReference>
<dbReference type="FunFam" id="2.30.30.40:FF:000001">
    <property type="entry name" value="Sorbin and SH3 domain-containing protein 1 isoform 2"/>
    <property type="match status" value="1"/>
</dbReference>
<dbReference type="Gene3D" id="2.30.30.40">
    <property type="entry name" value="SH3 Domains"/>
    <property type="match status" value="4"/>
</dbReference>
<dbReference type="Gene3D" id="3.30.40.10">
    <property type="entry name" value="Zinc/RING finger domain, C3HC4 (zinc finger)"/>
    <property type="match status" value="1"/>
</dbReference>
<dbReference type="InterPro" id="IPR050384">
    <property type="entry name" value="Endophilin_SH3RF"/>
</dbReference>
<dbReference type="InterPro" id="IPR036028">
    <property type="entry name" value="SH3-like_dom_sf"/>
</dbReference>
<dbReference type="InterPro" id="IPR001452">
    <property type="entry name" value="SH3_domain"/>
</dbReference>
<dbReference type="InterPro" id="IPR035816">
    <property type="entry name" value="SH3RF1/SH3RF3_SH3_4"/>
</dbReference>
<dbReference type="InterPro" id="IPR028502">
    <property type="entry name" value="SH3RF3_RING-HC_Zfn"/>
</dbReference>
<dbReference type="InterPro" id="IPR035612">
    <property type="entry name" value="SH3RF3_SH3_3"/>
</dbReference>
<dbReference type="InterPro" id="IPR027370">
    <property type="entry name" value="Znf-RING_euk"/>
</dbReference>
<dbReference type="InterPro" id="IPR001841">
    <property type="entry name" value="Znf_RING"/>
</dbReference>
<dbReference type="InterPro" id="IPR013083">
    <property type="entry name" value="Znf_RING/FYVE/PHD"/>
</dbReference>
<dbReference type="InterPro" id="IPR017907">
    <property type="entry name" value="Znf_RING_CS"/>
</dbReference>
<dbReference type="PANTHER" id="PTHR14167:SF116">
    <property type="entry name" value="CAP, ISOFORM AC"/>
    <property type="match status" value="1"/>
</dbReference>
<dbReference type="PANTHER" id="PTHR14167">
    <property type="entry name" value="SH3 DOMAIN-CONTAINING"/>
    <property type="match status" value="1"/>
</dbReference>
<dbReference type="Pfam" id="PF00018">
    <property type="entry name" value="SH3_1"/>
    <property type="match status" value="3"/>
</dbReference>
<dbReference type="Pfam" id="PF14604">
    <property type="entry name" value="SH3_9"/>
    <property type="match status" value="1"/>
</dbReference>
<dbReference type="Pfam" id="PF13445">
    <property type="entry name" value="zf-RING_UBOX"/>
    <property type="match status" value="1"/>
</dbReference>
<dbReference type="PRINTS" id="PR00499">
    <property type="entry name" value="P67PHOX"/>
</dbReference>
<dbReference type="SMART" id="SM00184">
    <property type="entry name" value="RING"/>
    <property type="match status" value="1"/>
</dbReference>
<dbReference type="SMART" id="SM00326">
    <property type="entry name" value="SH3"/>
    <property type="match status" value="4"/>
</dbReference>
<dbReference type="SUPFAM" id="SSF57850">
    <property type="entry name" value="RING/U-box"/>
    <property type="match status" value="1"/>
</dbReference>
<dbReference type="SUPFAM" id="SSF50044">
    <property type="entry name" value="SH3-domain"/>
    <property type="match status" value="4"/>
</dbReference>
<dbReference type="PROSITE" id="PS50002">
    <property type="entry name" value="SH3"/>
    <property type="match status" value="4"/>
</dbReference>
<dbReference type="PROSITE" id="PS00518">
    <property type="entry name" value="ZF_RING_1"/>
    <property type="match status" value="1"/>
</dbReference>
<dbReference type="PROSITE" id="PS50089">
    <property type="entry name" value="ZF_RING_2"/>
    <property type="match status" value="1"/>
</dbReference>
<organism>
    <name type="scientific">Homo sapiens</name>
    <name type="common">Human</name>
    <dbReference type="NCBI Taxonomy" id="9606"/>
    <lineage>
        <taxon>Eukaryota</taxon>
        <taxon>Metazoa</taxon>
        <taxon>Chordata</taxon>
        <taxon>Craniata</taxon>
        <taxon>Vertebrata</taxon>
        <taxon>Euteleostomi</taxon>
        <taxon>Mammalia</taxon>
        <taxon>Eutheria</taxon>
        <taxon>Euarchontoglires</taxon>
        <taxon>Primates</taxon>
        <taxon>Haplorrhini</taxon>
        <taxon>Catarrhini</taxon>
        <taxon>Hominidae</taxon>
        <taxon>Homo</taxon>
    </lineage>
</organism>
<proteinExistence type="evidence at protein level"/>
<keyword id="KW-0479">Metal-binding</keyword>
<keyword id="KW-0597">Phosphoprotein</keyword>
<keyword id="KW-1267">Proteomics identification</keyword>
<keyword id="KW-1185">Reference proteome</keyword>
<keyword id="KW-0677">Repeat</keyword>
<keyword id="KW-0728">SH3 domain</keyword>
<keyword id="KW-0808">Transferase</keyword>
<keyword id="KW-0832">Ubl conjugation</keyword>
<keyword id="KW-0833">Ubl conjugation pathway</keyword>
<keyword id="KW-0862">Zinc</keyword>
<keyword id="KW-0863">Zinc-finger</keyword>
<comment type="function">
    <text evidence="5">Has E3 ubiquitin-protein ligase activity.</text>
</comment>
<comment type="catalytic activity">
    <reaction evidence="5">
        <text>S-ubiquitinyl-[E2 ubiquitin-conjugating enzyme]-L-cysteine + [acceptor protein]-L-lysine = [E2 ubiquitin-conjugating enzyme]-L-cysteine + N(6)-ubiquitinyl-[acceptor protein]-L-lysine.</text>
        <dbReference type="EC" id="2.3.2.27"/>
    </reaction>
</comment>
<comment type="pathway">
    <text>Protein modification; protein ubiquitination.</text>
</comment>
<comment type="subunit">
    <text evidence="4 5">Interacts (via SH3 domain 3) with PAK2 (PubMed:16374509). Interacts with RAC1 (GTP-bound form) (PubMed:20696164).</text>
</comment>
<comment type="interaction">
    <interactant intactId="EBI-7975674">
        <id>Q8TEJ3</id>
    </interactant>
    <interactant intactId="EBI-1045887">
        <id>Q13177</id>
        <label>PAK2</label>
    </interactant>
    <organismsDiffer>false</organismsDiffer>
    <experiments>2</experiments>
</comment>
<comment type="interaction">
    <interactant intactId="EBI-7975674">
        <id>Q8TEJ3</id>
    </interactant>
    <interactant intactId="EBI-413628">
        <id>P63000</id>
        <label>RAC1</label>
    </interactant>
    <organismsDiffer>false</organismsDiffer>
    <experiments>6</experiments>
</comment>
<comment type="domain">
    <text evidence="5">The RING finger domain is required for ubiquitin ligase activity and autoubiquitination.</text>
</comment>
<comment type="PTM">
    <text evidence="5">Autoubiquitinated.</text>
</comment>
<comment type="similarity">
    <text evidence="7">Belongs to the SH3RF family.</text>
</comment>
<name>SH3R3_HUMAN</name>